<evidence type="ECO:0000250" key="1">
    <source>
        <dbReference type="UniProtKB" id="Q6PHW0"/>
    </source>
</evidence>
<evidence type="ECO:0000250" key="2">
    <source>
        <dbReference type="UniProtKB" id="Q9DCX8"/>
    </source>
</evidence>
<evidence type="ECO:0000255" key="3"/>
<evidence type="ECO:0000305" key="4"/>
<gene>
    <name type="primary">Iyd</name>
    <name type="synonym">Dehal1</name>
</gene>
<keyword id="KW-1003">Cell membrane</keyword>
<keyword id="KW-0968">Cytoplasmic vesicle</keyword>
<keyword id="KW-0285">Flavoprotein</keyword>
<keyword id="KW-0288">FMN</keyword>
<keyword id="KW-0472">Membrane</keyword>
<keyword id="KW-0521">NADP</keyword>
<keyword id="KW-0560">Oxidoreductase</keyword>
<keyword id="KW-1185">Reference proteome</keyword>
<keyword id="KW-0812">Transmembrane</keyword>
<keyword id="KW-1133">Transmembrane helix</keyword>
<dbReference type="EC" id="1.21.1.1" evidence="1"/>
<dbReference type="EMBL" id="BC091241">
    <property type="protein sequence ID" value="AAH91241.1"/>
    <property type="molecule type" value="mRNA"/>
</dbReference>
<dbReference type="RefSeq" id="NP_001020171.1">
    <property type="nucleotide sequence ID" value="NM_001025000.1"/>
</dbReference>
<dbReference type="SMR" id="Q5BK17"/>
<dbReference type="FunCoup" id="Q5BK17">
    <property type="interactions" value="4"/>
</dbReference>
<dbReference type="STRING" id="10116.ENSRNOP00000021893"/>
<dbReference type="iPTMnet" id="Q5BK17"/>
<dbReference type="PhosphoSitePlus" id="Q5BK17"/>
<dbReference type="PaxDb" id="10116-ENSRNOP00000021893"/>
<dbReference type="Ensembl" id="ENSRNOT00000021895.8">
    <property type="protein sequence ID" value="ENSRNOP00000021893.4"/>
    <property type="gene ID" value="ENSRNOG00000016286.8"/>
</dbReference>
<dbReference type="GeneID" id="308129"/>
<dbReference type="KEGG" id="rno:308129"/>
<dbReference type="UCSC" id="RGD:1309288">
    <property type="organism name" value="rat"/>
</dbReference>
<dbReference type="AGR" id="RGD:1309288"/>
<dbReference type="CTD" id="389434"/>
<dbReference type="RGD" id="1309288">
    <property type="gene designation" value="Iyd"/>
</dbReference>
<dbReference type="eggNOG" id="KOG3936">
    <property type="taxonomic scope" value="Eukaryota"/>
</dbReference>
<dbReference type="GeneTree" id="ENSGT00390000004348"/>
<dbReference type="HOGENOM" id="CLU_070764_1_0_1"/>
<dbReference type="InParanoid" id="Q5BK17"/>
<dbReference type="OMA" id="GANHQPW"/>
<dbReference type="OrthoDB" id="41362at2759"/>
<dbReference type="PhylomeDB" id="Q5BK17"/>
<dbReference type="TreeFam" id="TF313415"/>
<dbReference type="Reactome" id="R-RNO-209968">
    <property type="pathway name" value="Thyroxine biosynthesis"/>
</dbReference>
<dbReference type="PRO" id="PR:Q5BK17"/>
<dbReference type="Proteomes" id="UP000002494">
    <property type="component" value="Chromosome 1"/>
</dbReference>
<dbReference type="Bgee" id="ENSRNOG00000016286">
    <property type="expression patterns" value="Expressed in liver and 6 other cell types or tissues"/>
</dbReference>
<dbReference type="GO" id="GO:0030659">
    <property type="term" value="C:cytoplasmic vesicle membrane"/>
    <property type="evidence" value="ECO:0000250"/>
    <property type="project" value="UniProtKB"/>
</dbReference>
<dbReference type="GO" id="GO:0005886">
    <property type="term" value="C:plasma membrane"/>
    <property type="evidence" value="ECO:0000250"/>
    <property type="project" value="UniProtKB"/>
</dbReference>
<dbReference type="GO" id="GO:0010181">
    <property type="term" value="F:FMN binding"/>
    <property type="evidence" value="ECO:0000250"/>
    <property type="project" value="UniProtKB"/>
</dbReference>
<dbReference type="GO" id="GO:0140616">
    <property type="term" value="F:iodotyrosine deiodinase activity"/>
    <property type="evidence" value="ECO:0000250"/>
    <property type="project" value="UniProtKB"/>
</dbReference>
<dbReference type="GO" id="GO:0016491">
    <property type="term" value="F:oxidoreductase activity"/>
    <property type="evidence" value="ECO:0000318"/>
    <property type="project" value="GO_Central"/>
</dbReference>
<dbReference type="GO" id="GO:0042403">
    <property type="term" value="P:thyroid hormone metabolic process"/>
    <property type="evidence" value="ECO:0000250"/>
    <property type="project" value="UniProtKB"/>
</dbReference>
<dbReference type="GO" id="GO:0006570">
    <property type="term" value="P:tyrosine metabolic process"/>
    <property type="evidence" value="ECO:0000250"/>
    <property type="project" value="UniProtKB"/>
</dbReference>
<dbReference type="CDD" id="cd02144">
    <property type="entry name" value="iodotyrosine_dehalogenase"/>
    <property type="match status" value="1"/>
</dbReference>
<dbReference type="FunFam" id="3.40.109.10:FF:000004">
    <property type="entry name" value="Iodotyrosine deiodinase 1"/>
    <property type="match status" value="1"/>
</dbReference>
<dbReference type="Gene3D" id="3.40.109.10">
    <property type="entry name" value="NADH Oxidase"/>
    <property type="match status" value="1"/>
</dbReference>
<dbReference type="InterPro" id="IPR029479">
    <property type="entry name" value="Nitroreductase"/>
</dbReference>
<dbReference type="InterPro" id="IPR000415">
    <property type="entry name" value="Nitroreductase-like"/>
</dbReference>
<dbReference type="InterPro" id="IPR050627">
    <property type="entry name" value="Nitroreductase/BluB"/>
</dbReference>
<dbReference type="PANTHER" id="PTHR23026:SF90">
    <property type="entry name" value="IODOTYROSINE DEIODINASE 1"/>
    <property type="match status" value="1"/>
</dbReference>
<dbReference type="PANTHER" id="PTHR23026">
    <property type="entry name" value="NADPH NITROREDUCTASE"/>
    <property type="match status" value="1"/>
</dbReference>
<dbReference type="Pfam" id="PF00881">
    <property type="entry name" value="Nitroreductase"/>
    <property type="match status" value="1"/>
</dbReference>
<dbReference type="SUPFAM" id="SSF55469">
    <property type="entry name" value="FMN-dependent nitroreductase-like"/>
    <property type="match status" value="1"/>
</dbReference>
<protein>
    <recommendedName>
        <fullName evidence="1">Iodotyrosine deiodinase 1</fullName>
        <shortName evidence="1">IYD-1</shortName>
        <ecNumber evidence="1">1.21.1.1</ecNumber>
    </recommendedName>
    <alternativeName>
        <fullName evidence="1">Iodotyrosine dehalogenase 1</fullName>
    </alternativeName>
</protein>
<comment type="function">
    <text evidence="1">Catalyzes the dehalogenation of halotyrosines such as 3-bromo-L-tyrosine, 3-chloro-L-tyrosine, 3-iodo-L-tyrosine and 3,5-diiodo-L-tyrosine. During thyroid hormone biosynthesis, facilitates iodide salvage by catalysing the oxidative NADPH-dependent deiodination of the halogenated by-products of thyroid hormone production, monoiodotyrosine (L-MIT) and diiodotyrosine (L-DIT). The scavanged iodide can then reenter the hormone-producing pathways. Acts more efficiently on 3-iodo-L-tyrosine than 3,5-diiodo-L-tyrosine.</text>
</comment>
<comment type="catalytic activity">
    <reaction evidence="1">
        <text>2 iodide + L-tyrosine + 2 NADP(+) = 3,5-diiodo-L-tyrosine + 2 NADPH + H(+)</text>
        <dbReference type="Rhea" id="RHEA:32479"/>
        <dbReference type="ChEBI" id="CHEBI:15378"/>
        <dbReference type="ChEBI" id="CHEBI:16382"/>
        <dbReference type="ChEBI" id="CHEBI:57506"/>
        <dbReference type="ChEBI" id="CHEBI:57783"/>
        <dbReference type="ChEBI" id="CHEBI:58315"/>
        <dbReference type="ChEBI" id="CHEBI:58349"/>
        <dbReference type="EC" id="1.21.1.1"/>
    </reaction>
</comment>
<comment type="catalytic activity">
    <reaction evidence="1">
        <text>iodide + L-tyrosine + NADP(+) = 3-iodo-L-tyrosine + NADPH</text>
        <dbReference type="Rhea" id="RHEA:27453"/>
        <dbReference type="ChEBI" id="CHEBI:16382"/>
        <dbReference type="ChEBI" id="CHEBI:57783"/>
        <dbReference type="ChEBI" id="CHEBI:58315"/>
        <dbReference type="ChEBI" id="CHEBI:58349"/>
        <dbReference type="ChEBI" id="CHEBI:59898"/>
    </reaction>
    <physiologicalReaction direction="right-to-left" evidence="1">
        <dbReference type="Rhea" id="RHEA:27455"/>
    </physiologicalReaction>
</comment>
<comment type="catalytic activity">
    <reaction evidence="1">
        <text>3-iodo-L-tyrosine + iodide + NADP(+) = 3,5-diiodo-L-tyrosine + NADPH + H(+)</text>
        <dbReference type="Rhea" id="RHEA:27457"/>
        <dbReference type="ChEBI" id="CHEBI:15378"/>
        <dbReference type="ChEBI" id="CHEBI:16382"/>
        <dbReference type="ChEBI" id="CHEBI:57506"/>
        <dbReference type="ChEBI" id="CHEBI:57783"/>
        <dbReference type="ChEBI" id="CHEBI:58349"/>
        <dbReference type="ChEBI" id="CHEBI:59898"/>
    </reaction>
    <physiologicalReaction direction="right-to-left" evidence="1">
        <dbReference type="Rhea" id="RHEA:27459"/>
    </physiologicalReaction>
</comment>
<comment type="catalytic activity">
    <reaction evidence="1">
        <text>L-tyrosine + chloride + NADP(+) = 3-chloro-L-tyrosine + NADPH</text>
        <dbReference type="Rhea" id="RHEA:70343"/>
        <dbReference type="ChEBI" id="CHEBI:17996"/>
        <dbReference type="ChEBI" id="CHEBI:57783"/>
        <dbReference type="ChEBI" id="CHEBI:58315"/>
        <dbReference type="ChEBI" id="CHEBI:58349"/>
        <dbReference type="ChEBI" id="CHEBI:189422"/>
    </reaction>
    <physiologicalReaction direction="right-to-left" evidence="1">
        <dbReference type="Rhea" id="RHEA:70345"/>
    </physiologicalReaction>
</comment>
<comment type="catalytic activity">
    <reaction evidence="1">
        <text>bromide + L-tyrosine + NADP(+) = 3-bromo-L-tyrosine + NADPH</text>
        <dbReference type="Rhea" id="RHEA:70347"/>
        <dbReference type="ChEBI" id="CHEBI:15858"/>
        <dbReference type="ChEBI" id="CHEBI:57783"/>
        <dbReference type="ChEBI" id="CHEBI:58315"/>
        <dbReference type="ChEBI" id="CHEBI:58349"/>
        <dbReference type="ChEBI" id="CHEBI:189423"/>
    </reaction>
    <physiologicalReaction direction="right-to-left" evidence="1">
        <dbReference type="Rhea" id="RHEA:70349"/>
    </physiologicalReaction>
</comment>
<comment type="cofactor">
    <cofactor evidence="1">
        <name>FMN</name>
        <dbReference type="ChEBI" id="CHEBI:58210"/>
    </cofactor>
</comment>
<comment type="subunit">
    <text evidence="1">Homodimer.</text>
</comment>
<comment type="subcellular location">
    <subcellularLocation>
        <location evidence="1">Cell membrane</location>
        <topology evidence="1">Single-pass membrane protein</topology>
    </subcellularLocation>
    <subcellularLocation>
        <location evidence="1">Cytoplasmic vesicle membrane</location>
    </subcellularLocation>
</comment>
<comment type="similarity">
    <text evidence="4">Belongs to the nitroreductase family.</text>
</comment>
<proteinExistence type="evidence at transcript level"/>
<accession>Q5BK17</accession>
<sequence length="285" mass="32846">MFLLTPVLVAVVCILVIWVFKNADRSLEEKKEEARAQPWVDEDLKDNTEHLQVEEDTEEWQESEESVEHILFSHTRYPEQEMRMRSQEFYELLSKRRSIRFISSEPVPMEVIDNVIKAAGTAPSGAHTEPWTFVVVKDPDMKHKIREIIEEEEEINYMKRMGKRWVTDLKKLRTNWIKEYLDTAPVLILIFKQVHGFAVNGKKKVHYYNEISVSIACGILLAALQNAGLVTVTTTPLNCGPRLRVLLGRPSHEKLLVLLPVGYPSRGATVPDLKRKTLDQIMVTV</sequence>
<reference key="1">
    <citation type="journal article" date="2004" name="Genome Res.">
        <title>The status, quality, and expansion of the NIH full-length cDNA project: the Mammalian Gene Collection (MGC).</title>
        <authorList>
            <consortium name="The MGC Project Team"/>
        </authorList>
    </citation>
    <scope>NUCLEOTIDE SEQUENCE [LARGE SCALE MRNA]</scope>
    <source>
        <tissue>Liver</tissue>
    </source>
</reference>
<name>IYD1_RAT</name>
<feature type="chain" id="PRO_0000230282" description="Iodotyrosine deiodinase 1">
    <location>
        <begin position="1"/>
        <end position="285"/>
    </location>
</feature>
<feature type="transmembrane region" description="Helical" evidence="3">
    <location>
        <begin position="1"/>
        <end position="21"/>
    </location>
</feature>
<feature type="binding site" evidence="2">
    <location>
        <begin position="96"/>
        <end position="100"/>
    </location>
    <ligand>
        <name>FMN</name>
        <dbReference type="ChEBI" id="CHEBI:58210"/>
    </ligand>
</feature>
<feature type="binding site" evidence="2">
    <location>
        <begin position="124"/>
        <end position="125"/>
    </location>
    <ligand>
        <name>FMN</name>
        <dbReference type="ChEBI" id="CHEBI:58210"/>
    </ligand>
</feature>
<feature type="binding site" evidence="2">
    <location>
        <position position="126"/>
    </location>
    <ligand>
        <name>3,5-diiodo-L-tyrosine</name>
        <dbReference type="ChEBI" id="CHEBI:57506"/>
    </ligand>
</feature>
<feature type="binding site" evidence="2">
    <location>
        <position position="126"/>
    </location>
    <ligand>
        <name>3-iodo-L-tyrosine</name>
        <dbReference type="ChEBI" id="CHEBI:59898"/>
    </ligand>
</feature>
<feature type="binding site" evidence="2">
    <location>
        <position position="153"/>
    </location>
    <ligand>
        <name>3,5-diiodo-L-tyrosine</name>
        <dbReference type="ChEBI" id="CHEBI:57506"/>
    </ligand>
</feature>
<feature type="binding site" evidence="2">
    <location>
        <position position="153"/>
    </location>
    <ligand>
        <name>3-iodo-L-tyrosine</name>
        <dbReference type="ChEBI" id="CHEBI:59898"/>
    </ligand>
</feature>
<feature type="binding site" evidence="2">
    <location>
        <position position="157"/>
    </location>
    <ligand>
        <name>3,5-diiodo-L-tyrosine</name>
        <dbReference type="ChEBI" id="CHEBI:57506"/>
    </ligand>
</feature>
<feature type="binding site" evidence="2">
    <location>
        <position position="157"/>
    </location>
    <ligand>
        <name>3-iodo-L-tyrosine</name>
        <dbReference type="ChEBI" id="CHEBI:59898"/>
    </ligand>
</feature>
<feature type="binding site" evidence="2">
    <location>
        <position position="178"/>
    </location>
    <ligand>
        <name>3,5-diiodo-L-tyrosine</name>
        <dbReference type="ChEBI" id="CHEBI:57506"/>
    </ligand>
</feature>
<feature type="binding site" evidence="2">
    <location>
        <position position="178"/>
    </location>
    <ligand>
        <name>3-iodo-L-tyrosine</name>
        <dbReference type="ChEBI" id="CHEBI:59898"/>
    </ligand>
</feature>
<feature type="binding site" evidence="2">
    <location>
        <begin position="233"/>
        <end position="235"/>
    </location>
    <ligand>
        <name>FMN</name>
        <dbReference type="ChEBI" id="CHEBI:58210"/>
    </ligand>
</feature>
<feature type="binding site" evidence="2">
    <location>
        <position position="275"/>
    </location>
    <ligand>
        <name>FMN</name>
        <dbReference type="ChEBI" id="CHEBI:58210"/>
    </ligand>
</feature>
<organism>
    <name type="scientific">Rattus norvegicus</name>
    <name type="common">Rat</name>
    <dbReference type="NCBI Taxonomy" id="10116"/>
    <lineage>
        <taxon>Eukaryota</taxon>
        <taxon>Metazoa</taxon>
        <taxon>Chordata</taxon>
        <taxon>Craniata</taxon>
        <taxon>Vertebrata</taxon>
        <taxon>Euteleostomi</taxon>
        <taxon>Mammalia</taxon>
        <taxon>Eutheria</taxon>
        <taxon>Euarchontoglires</taxon>
        <taxon>Glires</taxon>
        <taxon>Rodentia</taxon>
        <taxon>Myomorpha</taxon>
        <taxon>Muroidea</taxon>
        <taxon>Muridae</taxon>
        <taxon>Murinae</taxon>
        <taxon>Rattus</taxon>
    </lineage>
</organism>